<feature type="chain" id="PRO_0000117606" description="NADH-ubiquinone oxidoreductase chain 2">
    <location>
        <begin position="1"/>
        <end position="385"/>
    </location>
</feature>
<feature type="transmembrane region" description="Helical" evidence="2">
    <location>
        <begin position="12"/>
        <end position="32"/>
    </location>
</feature>
<feature type="transmembrane region" description="Helical" evidence="2">
    <location>
        <begin position="34"/>
        <end position="50"/>
    </location>
</feature>
<feature type="transmembrane region" description="Helical" evidence="2">
    <location>
        <begin position="66"/>
        <end position="86"/>
    </location>
</feature>
<feature type="transmembrane region" description="Helical" evidence="2">
    <location>
        <begin position="112"/>
        <end position="132"/>
    </location>
</feature>
<feature type="transmembrane region" description="Helical" evidence="2">
    <location>
        <begin position="161"/>
        <end position="181"/>
    </location>
</feature>
<feature type="transmembrane region" description="Helical" evidence="2">
    <location>
        <begin position="200"/>
        <end position="220"/>
    </location>
</feature>
<feature type="transmembrane region" description="Helical" evidence="2">
    <location>
        <begin position="227"/>
        <end position="247"/>
    </location>
</feature>
<feature type="transmembrane region" description="Helical" evidence="2">
    <location>
        <begin position="268"/>
        <end position="288"/>
    </location>
</feature>
<feature type="transmembrane region" description="Helical" evidence="2">
    <location>
        <begin position="291"/>
        <end position="311"/>
    </location>
</feature>
<feature type="transmembrane region" description="Helical" evidence="2">
    <location>
        <begin position="354"/>
        <end position="374"/>
    </location>
</feature>
<dbReference type="EC" id="7.1.1.2"/>
<dbReference type="EMBL" id="AF000023">
    <property type="protein sequence ID" value="AAC04638.1"/>
    <property type="molecule type" value="Genomic_DNA"/>
</dbReference>
<dbReference type="PIR" id="T11892">
    <property type="entry name" value="T11892"/>
</dbReference>
<dbReference type="RefSeq" id="NP_009261.1">
    <property type="nucleotide sequence ID" value="NC_000933.1"/>
</dbReference>
<dbReference type="SMR" id="O47495"/>
<dbReference type="GeneID" id="808776"/>
<dbReference type="CTD" id="4536"/>
<dbReference type="GO" id="GO:0005743">
    <property type="term" value="C:mitochondrial inner membrane"/>
    <property type="evidence" value="ECO:0007669"/>
    <property type="project" value="UniProtKB-SubCell"/>
</dbReference>
<dbReference type="GO" id="GO:0008137">
    <property type="term" value="F:NADH dehydrogenase (ubiquinone) activity"/>
    <property type="evidence" value="ECO:0007669"/>
    <property type="project" value="UniProtKB-EC"/>
</dbReference>
<dbReference type="GO" id="GO:0042773">
    <property type="term" value="P:ATP synthesis coupled electron transport"/>
    <property type="evidence" value="ECO:0007669"/>
    <property type="project" value="InterPro"/>
</dbReference>
<dbReference type="InterPro" id="IPR010096">
    <property type="entry name" value="NADH-Q_OxRdtase_suN/2"/>
</dbReference>
<dbReference type="InterPro" id="IPR001750">
    <property type="entry name" value="ND/Mrp_TM"/>
</dbReference>
<dbReference type="NCBIfam" id="TIGR01770">
    <property type="entry name" value="NDH_I_N"/>
    <property type="match status" value="1"/>
</dbReference>
<dbReference type="PANTHER" id="PTHR22773">
    <property type="entry name" value="NADH DEHYDROGENASE"/>
    <property type="match status" value="1"/>
</dbReference>
<dbReference type="Pfam" id="PF00361">
    <property type="entry name" value="Proton_antipo_M"/>
    <property type="match status" value="1"/>
</dbReference>
<keyword id="KW-0249">Electron transport</keyword>
<keyword id="KW-0472">Membrane</keyword>
<keyword id="KW-0496">Mitochondrion</keyword>
<keyword id="KW-0999">Mitochondrion inner membrane</keyword>
<keyword id="KW-0520">NAD</keyword>
<keyword id="KW-0679">Respiratory chain</keyword>
<keyword id="KW-1278">Translocase</keyword>
<keyword id="KW-0812">Transmembrane</keyword>
<keyword id="KW-1133">Transmembrane helix</keyword>
<keyword id="KW-0813">Transport</keyword>
<keyword id="KW-0830">Ubiquinone</keyword>
<gene>
    <name type="primary">ND2</name>
</gene>
<sequence length="385" mass="40974">MTPPSTGGEATPVLVLMVALGSILLVSASNWLSVYLAIELPTLSLFILVAQKRGSGFSAEAGLKYFVLGALASGLFLFGCALLCGLTGGTSIPCIDLVLNQGRGPALDPSGVITPIGSLLITGALLFKLSAAPFHMWAPDVYDGAPTTTTALLATVPKVGVFSILVSIGPVANVLLIATIFSMVVGALGALNQTKIKRLLAYSGIAHMGFVLWGIEIGTFESVQASLIYMILYVIMSVCAFAMVLALGGLKNLIVEFSGLSRKEPALAITLALTFLSIAGVPPLIGFFSKWWILLSGITYQYYLVSILAVICSVVAGVYYVRIVKIIYFQADSFFLVGLKTLREKKRINFRKSLLIGASFYLMGFMIISPNLLLQLAHWATVGLF</sequence>
<evidence type="ECO:0000250" key="1"/>
<evidence type="ECO:0000255" key="2"/>
<evidence type="ECO:0000305" key="3"/>
<accession>O47495</accession>
<protein>
    <recommendedName>
        <fullName>NADH-ubiquinone oxidoreductase chain 2</fullName>
        <ecNumber>7.1.1.2</ecNumber>
    </recommendedName>
    <alternativeName>
        <fullName>NADH dehydrogenase subunit 2</fullName>
    </alternativeName>
</protein>
<organism>
    <name type="scientific">Metridium senile</name>
    <name type="common">Brown sea anemone</name>
    <name type="synonym">Frilled sea anemone</name>
    <dbReference type="NCBI Taxonomy" id="6116"/>
    <lineage>
        <taxon>Eukaryota</taxon>
        <taxon>Metazoa</taxon>
        <taxon>Cnidaria</taxon>
        <taxon>Anthozoa</taxon>
        <taxon>Hexacorallia</taxon>
        <taxon>Actiniaria</taxon>
        <taxon>Nynantheae</taxon>
        <taxon>Metridiidae</taxon>
        <taxon>Metridium</taxon>
    </lineage>
</organism>
<reference key="1">
    <citation type="submission" date="1997-04" db="EMBL/GenBank/DDBJ databases">
        <authorList>
            <person name="Beagley C.T."/>
            <person name="Okimoto R."/>
            <person name="Wolstenholme D.R."/>
        </authorList>
    </citation>
    <scope>NUCLEOTIDE SEQUENCE [GENOMIC DNA]</scope>
    <source>
        <strain>White morph</strain>
    </source>
</reference>
<comment type="function">
    <text evidence="1">Core subunit of the mitochondrial membrane respiratory chain NADH dehydrogenase (Complex I) that is believed to belong to the minimal assembly required for catalysis. Complex I functions in the transfer of electrons from NADH to the respiratory chain. The immediate electron acceptor for the enzyme is believed to be ubiquinone (By similarity).</text>
</comment>
<comment type="catalytic activity">
    <reaction>
        <text>a ubiquinone + NADH + 5 H(+)(in) = a ubiquinol + NAD(+) + 4 H(+)(out)</text>
        <dbReference type="Rhea" id="RHEA:29091"/>
        <dbReference type="Rhea" id="RHEA-COMP:9565"/>
        <dbReference type="Rhea" id="RHEA-COMP:9566"/>
        <dbReference type="ChEBI" id="CHEBI:15378"/>
        <dbReference type="ChEBI" id="CHEBI:16389"/>
        <dbReference type="ChEBI" id="CHEBI:17976"/>
        <dbReference type="ChEBI" id="CHEBI:57540"/>
        <dbReference type="ChEBI" id="CHEBI:57945"/>
        <dbReference type="EC" id="7.1.1.2"/>
    </reaction>
</comment>
<comment type="subcellular location">
    <subcellularLocation>
        <location>Mitochondrion inner membrane</location>
        <topology>Multi-pass membrane protein</topology>
    </subcellularLocation>
</comment>
<comment type="similarity">
    <text evidence="3">Belongs to the complex I subunit 2 family.</text>
</comment>
<geneLocation type="mitochondrion"/>
<name>NU2M_METSE</name>
<proteinExistence type="inferred from homology"/>